<accession>C4ZUJ8</accession>
<dbReference type="EMBL" id="CP001396">
    <property type="protein sequence ID" value="ACR64589.1"/>
    <property type="molecule type" value="Genomic_DNA"/>
</dbReference>
<dbReference type="RefSeq" id="WP_000903373.1">
    <property type="nucleotide sequence ID" value="NC_012759.1"/>
</dbReference>
<dbReference type="SMR" id="C4ZUJ8"/>
<dbReference type="KEGG" id="ebw:BWG_3034"/>
<dbReference type="HOGENOM" id="CLU_166087_2_1_6"/>
<dbReference type="GO" id="GO:1990228">
    <property type="term" value="C:sulfurtransferase complex"/>
    <property type="evidence" value="ECO:0007669"/>
    <property type="project" value="TreeGrafter"/>
</dbReference>
<dbReference type="GO" id="GO:0002143">
    <property type="term" value="P:tRNA wobble position uridine thiolation"/>
    <property type="evidence" value="ECO:0007669"/>
    <property type="project" value="InterPro"/>
</dbReference>
<dbReference type="FunFam" id="3.40.1260.10:FF:000002">
    <property type="entry name" value="Sulfurtransferase TusB"/>
    <property type="match status" value="1"/>
</dbReference>
<dbReference type="Gene3D" id="3.40.1260.10">
    <property type="entry name" value="DsrEFH-like"/>
    <property type="match status" value="1"/>
</dbReference>
<dbReference type="HAMAP" id="MF_01564">
    <property type="entry name" value="Thiourid_synth_B"/>
    <property type="match status" value="1"/>
</dbReference>
<dbReference type="InterPro" id="IPR027396">
    <property type="entry name" value="DsrEFH-like"/>
</dbReference>
<dbReference type="InterPro" id="IPR023526">
    <property type="entry name" value="Sulphur_relay_TusB"/>
</dbReference>
<dbReference type="InterPro" id="IPR007215">
    <property type="entry name" value="Sulphur_relay_TusB/DsrH"/>
</dbReference>
<dbReference type="NCBIfam" id="NF010035">
    <property type="entry name" value="PRK13510.1"/>
    <property type="match status" value="1"/>
</dbReference>
<dbReference type="NCBIfam" id="TIGR03011">
    <property type="entry name" value="sulf_tusB_dsrH"/>
    <property type="match status" value="1"/>
</dbReference>
<dbReference type="PANTHER" id="PTHR37526">
    <property type="entry name" value="PROTEIN TUSB"/>
    <property type="match status" value="1"/>
</dbReference>
<dbReference type="PANTHER" id="PTHR37526:SF1">
    <property type="entry name" value="PROTEIN TUSB"/>
    <property type="match status" value="1"/>
</dbReference>
<dbReference type="Pfam" id="PF04077">
    <property type="entry name" value="DsrH"/>
    <property type="match status" value="1"/>
</dbReference>
<dbReference type="SUPFAM" id="SSF75169">
    <property type="entry name" value="DsrEFH-like"/>
    <property type="match status" value="1"/>
</dbReference>
<feature type="chain" id="PRO_1000215513" description="Protein TusB">
    <location>
        <begin position="1"/>
        <end position="95"/>
    </location>
</feature>
<organism>
    <name type="scientific">Escherichia coli (strain K12 / MC4100 / BW2952)</name>
    <dbReference type="NCBI Taxonomy" id="595496"/>
    <lineage>
        <taxon>Bacteria</taxon>
        <taxon>Pseudomonadati</taxon>
        <taxon>Pseudomonadota</taxon>
        <taxon>Gammaproteobacteria</taxon>
        <taxon>Enterobacterales</taxon>
        <taxon>Enterobacteriaceae</taxon>
        <taxon>Escherichia</taxon>
    </lineage>
</organism>
<proteinExistence type="inferred from homology"/>
<gene>
    <name evidence="1" type="primary">tusB</name>
    <name type="ordered locus">BWG_3034</name>
</gene>
<comment type="function">
    <text evidence="1">Part of a sulfur-relay system required for 2-thiolation of 5-methylaminomethyl-2-thiouridine (mnm(5)s(2)U) at tRNA wobble positions.</text>
</comment>
<comment type="subunit">
    <text evidence="1">Heterohexamer, formed by a dimer of trimers. The hexameric TusBCD complex contains 2 copies each of TusB, TusC and TusD. The TusBCD complex interacts with TusE.</text>
</comment>
<comment type="subcellular location">
    <subcellularLocation>
        <location evidence="1">Cytoplasm</location>
    </subcellularLocation>
</comment>
<comment type="similarity">
    <text evidence="1">Belongs to the DsrH/TusB family.</text>
</comment>
<evidence type="ECO:0000255" key="1">
    <source>
        <dbReference type="HAMAP-Rule" id="MF_01564"/>
    </source>
</evidence>
<reference key="1">
    <citation type="journal article" date="2009" name="J. Bacteriol.">
        <title>Genomic sequencing reveals regulatory mutations and recombinational events in the widely used MC4100 lineage of Escherichia coli K-12.</title>
        <authorList>
            <person name="Ferenci T."/>
            <person name="Zhou Z."/>
            <person name="Betteridge T."/>
            <person name="Ren Y."/>
            <person name="Liu Y."/>
            <person name="Feng L."/>
            <person name="Reeves P.R."/>
            <person name="Wang L."/>
        </authorList>
    </citation>
    <scope>NUCLEOTIDE SEQUENCE [LARGE SCALE GENOMIC DNA]</scope>
    <source>
        <strain>K12 / MC4100 / BW2952</strain>
    </source>
</reference>
<protein>
    <recommendedName>
        <fullName evidence="1">Protein TusB</fullName>
    </recommendedName>
    <alternativeName>
        <fullName evidence="1">tRNA 2-thiouridine synthesizing protein B</fullName>
    </alternativeName>
</protein>
<sequence>MLHTLHRSPWLTDFAALLRLLSEGDELLLLQDGVTAAVDGNRYLESLRNAPIKVYALNEDLIARGLTGQISNDIILIDYTDFVRLTVKHPSQMAW</sequence>
<name>TUSB_ECOBW</name>
<keyword id="KW-0963">Cytoplasm</keyword>
<keyword id="KW-0819">tRNA processing</keyword>